<gene>
    <name evidence="1" type="primary">lpxC</name>
    <name type="ordered locus">Ava_0095</name>
</gene>
<evidence type="ECO:0000255" key="1">
    <source>
        <dbReference type="HAMAP-Rule" id="MF_00388"/>
    </source>
</evidence>
<name>LPXC_TRIV2</name>
<feature type="chain" id="PRO_0000253641" description="UDP-3-O-acyl-N-acetylglucosamine deacetylase">
    <location>
        <begin position="1"/>
        <end position="280"/>
    </location>
</feature>
<feature type="active site" description="Proton donor" evidence="1">
    <location>
        <position position="265"/>
    </location>
</feature>
<feature type="binding site" evidence="1">
    <location>
        <position position="77"/>
    </location>
    <ligand>
        <name>Zn(2+)</name>
        <dbReference type="ChEBI" id="CHEBI:29105"/>
    </ligand>
</feature>
<feature type="binding site" evidence="1">
    <location>
        <position position="238"/>
    </location>
    <ligand>
        <name>Zn(2+)</name>
        <dbReference type="ChEBI" id="CHEBI:29105"/>
    </ligand>
</feature>
<feature type="binding site" evidence="1">
    <location>
        <position position="242"/>
    </location>
    <ligand>
        <name>Zn(2+)</name>
        <dbReference type="ChEBI" id="CHEBI:29105"/>
    </ligand>
</feature>
<dbReference type="EC" id="3.5.1.108" evidence="1"/>
<dbReference type="EMBL" id="CP000117">
    <property type="protein sequence ID" value="ABA19721.1"/>
    <property type="molecule type" value="Genomic_DNA"/>
</dbReference>
<dbReference type="SMR" id="Q3MH15"/>
<dbReference type="STRING" id="240292.Ava_0095"/>
<dbReference type="KEGG" id="ava:Ava_0095"/>
<dbReference type="eggNOG" id="COG0774">
    <property type="taxonomic scope" value="Bacteria"/>
</dbReference>
<dbReference type="HOGENOM" id="CLU_046528_0_0_3"/>
<dbReference type="UniPathway" id="UPA00359">
    <property type="reaction ID" value="UER00478"/>
</dbReference>
<dbReference type="Proteomes" id="UP000002533">
    <property type="component" value="Chromosome"/>
</dbReference>
<dbReference type="GO" id="GO:0016020">
    <property type="term" value="C:membrane"/>
    <property type="evidence" value="ECO:0007669"/>
    <property type="project" value="GOC"/>
</dbReference>
<dbReference type="GO" id="GO:0046872">
    <property type="term" value="F:metal ion binding"/>
    <property type="evidence" value="ECO:0007669"/>
    <property type="project" value="UniProtKB-KW"/>
</dbReference>
<dbReference type="GO" id="GO:0103117">
    <property type="term" value="F:UDP-3-O-acyl-N-acetylglucosamine deacetylase activity"/>
    <property type="evidence" value="ECO:0007669"/>
    <property type="project" value="UniProtKB-UniRule"/>
</dbReference>
<dbReference type="GO" id="GO:0009245">
    <property type="term" value="P:lipid A biosynthetic process"/>
    <property type="evidence" value="ECO:0007669"/>
    <property type="project" value="UniProtKB-UniRule"/>
</dbReference>
<dbReference type="Gene3D" id="3.30.230.20">
    <property type="entry name" value="lpxc deacetylase, domain 1"/>
    <property type="match status" value="1"/>
</dbReference>
<dbReference type="Gene3D" id="3.30.1700.10">
    <property type="entry name" value="lpxc deacetylase, domain 2"/>
    <property type="match status" value="1"/>
</dbReference>
<dbReference type="HAMAP" id="MF_00388">
    <property type="entry name" value="LpxC"/>
    <property type="match status" value="1"/>
</dbReference>
<dbReference type="InterPro" id="IPR020568">
    <property type="entry name" value="Ribosomal_Su5_D2-typ_SF"/>
</dbReference>
<dbReference type="InterPro" id="IPR004463">
    <property type="entry name" value="UDP-acyl_GlcNac_deAcase"/>
</dbReference>
<dbReference type="InterPro" id="IPR011334">
    <property type="entry name" value="UDP-acyl_GlcNac_deAcase_C"/>
</dbReference>
<dbReference type="InterPro" id="IPR015870">
    <property type="entry name" value="UDP-acyl_N-AcGlcN_deAcase_N"/>
</dbReference>
<dbReference type="NCBIfam" id="TIGR00325">
    <property type="entry name" value="lpxC"/>
    <property type="match status" value="1"/>
</dbReference>
<dbReference type="PANTHER" id="PTHR33694">
    <property type="entry name" value="UDP-3-O-ACYL-N-ACETYLGLUCOSAMINE DEACETYLASE 1, MITOCHONDRIAL-RELATED"/>
    <property type="match status" value="1"/>
</dbReference>
<dbReference type="PANTHER" id="PTHR33694:SF1">
    <property type="entry name" value="UDP-3-O-ACYL-N-ACETYLGLUCOSAMINE DEACETYLASE 1, MITOCHONDRIAL-RELATED"/>
    <property type="match status" value="1"/>
</dbReference>
<dbReference type="Pfam" id="PF03331">
    <property type="entry name" value="LpxC"/>
    <property type="match status" value="1"/>
</dbReference>
<dbReference type="SUPFAM" id="SSF54211">
    <property type="entry name" value="Ribosomal protein S5 domain 2-like"/>
    <property type="match status" value="2"/>
</dbReference>
<proteinExistence type="inferred from homology"/>
<organism>
    <name type="scientific">Trichormus variabilis (strain ATCC 29413 / PCC 7937)</name>
    <name type="common">Anabaena variabilis</name>
    <dbReference type="NCBI Taxonomy" id="240292"/>
    <lineage>
        <taxon>Bacteria</taxon>
        <taxon>Bacillati</taxon>
        <taxon>Cyanobacteriota</taxon>
        <taxon>Cyanophyceae</taxon>
        <taxon>Nostocales</taxon>
        <taxon>Nostocaceae</taxon>
        <taxon>Trichormus</taxon>
    </lineage>
</organism>
<keyword id="KW-0378">Hydrolase</keyword>
<keyword id="KW-0441">Lipid A biosynthesis</keyword>
<keyword id="KW-0444">Lipid biosynthesis</keyword>
<keyword id="KW-0443">Lipid metabolism</keyword>
<keyword id="KW-0479">Metal-binding</keyword>
<keyword id="KW-0862">Zinc</keyword>
<accession>Q3MH15</accession>
<protein>
    <recommendedName>
        <fullName evidence="1">UDP-3-O-acyl-N-acetylglucosamine deacetylase</fullName>
        <shortName evidence="1">UDP-3-O-acyl-GlcNAc deacetylase</shortName>
        <ecNumber evidence="1">3.5.1.108</ecNumber>
    </recommendedName>
    <alternativeName>
        <fullName evidence="1">UDP-3-O-[R-3-hydroxymyristoyl]-N-acetylglucosamine deacetylase</fullName>
    </alternativeName>
</protein>
<reference key="1">
    <citation type="journal article" date="2014" name="Stand. Genomic Sci.">
        <title>Complete genome sequence of Anabaena variabilis ATCC 29413.</title>
        <authorList>
            <person name="Thiel T."/>
            <person name="Pratte B.S."/>
            <person name="Zhong J."/>
            <person name="Goodwin L."/>
            <person name="Copeland A."/>
            <person name="Lucas S."/>
            <person name="Han C."/>
            <person name="Pitluck S."/>
            <person name="Land M.L."/>
            <person name="Kyrpides N.C."/>
            <person name="Woyke T."/>
        </authorList>
    </citation>
    <scope>NUCLEOTIDE SEQUENCE [LARGE SCALE GENOMIC DNA]</scope>
    <source>
        <strain>ATCC 29413 / PCC 7937</strain>
    </source>
</reference>
<comment type="function">
    <text evidence="1">Catalyzes the hydrolysis of UDP-3-O-myristoyl-N-acetylglucosamine to form UDP-3-O-myristoylglucosamine and acetate, the committed step in lipid A biosynthesis.</text>
</comment>
<comment type="catalytic activity">
    <reaction evidence="1">
        <text>a UDP-3-O-[(3R)-3-hydroxyacyl]-N-acetyl-alpha-D-glucosamine + H2O = a UDP-3-O-[(3R)-3-hydroxyacyl]-alpha-D-glucosamine + acetate</text>
        <dbReference type="Rhea" id="RHEA:67816"/>
        <dbReference type="ChEBI" id="CHEBI:15377"/>
        <dbReference type="ChEBI" id="CHEBI:30089"/>
        <dbReference type="ChEBI" id="CHEBI:137740"/>
        <dbReference type="ChEBI" id="CHEBI:173225"/>
        <dbReference type="EC" id="3.5.1.108"/>
    </reaction>
</comment>
<comment type="cofactor">
    <cofactor evidence="1">
        <name>Zn(2+)</name>
        <dbReference type="ChEBI" id="CHEBI:29105"/>
    </cofactor>
</comment>
<comment type="pathway">
    <text evidence="1">Glycolipid biosynthesis; lipid IV(A) biosynthesis; lipid IV(A) from (3R)-3-hydroxytetradecanoyl-[acyl-carrier-protein] and UDP-N-acetyl-alpha-D-glucosamine: step 2/6.</text>
</comment>
<comment type="similarity">
    <text evidence="1">Belongs to the LpxC family.</text>
</comment>
<sequence>MKQHTLAEAIAHTGVGLHSGVSTHVRILPADAGSGRYFVRVDLPDSPIIPAQVAAVSQTVLSTQLGKGEAGVRTVEHLLAALAGMGVDNARIEIDGSEVPLLDGSAQEWVKSIAEVGLVTQAVTDNTVSWDIPEPIWIHQDDAFVAAIPASETRFSYGIDFDLPAIGNQWYSWPLTTESDTSFAKEVAPARTFGLLHQIEYLQKSGLIKGGSLDNALVCGPDGWVNPPLRFANEPVRHKILDLVGDLSLLGYFPRAHFLAYKASHNLHIQLAQRILALSN</sequence>